<accession>B0K5S8</accession>
<gene>
    <name evidence="1" type="primary">rpsI</name>
    <name type="ordered locus">Teth514_0902</name>
</gene>
<comment type="similarity">
    <text evidence="1">Belongs to the universal ribosomal protein uS9 family.</text>
</comment>
<keyword id="KW-0687">Ribonucleoprotein</keyword>
<keyword id="KW-0689">Ribosomal protein</keyword>
<sequence length="130" mass="14669">MATVQYYGTGRRKEAVARVRLMPGKGNIIINNRPLEEYFTLDTLKYTVKQPLILTETIDKFDVYAKVSGGGLTGQAGAVRLGIARALVKVDSELRPILKKAGFLTRDPRMKERRKYGLKKARKAPQFSKR</sequence>
<organism>
    <name type="scientific">Thermoanaerobacter sp. (strain X514)</name>
    <dbReference type="NCBI Taxonomy" id="399726"/>
    <lineage>
        <taxon>Bacteria</taxon>
        <taxon>Bacillati</taxon>
        <taxon>Bacillota</taxon>
        <taxon>Clostridia</taxon>
        <taxon>Thermoanaerobacterales</taxon>
        <taxon>Thermoanaerobacteraceae</taxon>
        <taxon>Thermoanaerobacter</taxon>
    </lineage>
</organism>
<dbReference type="EMBL" id="CP000923">
    <property type="protein sequence ID" value="ABY92204.1"/>
    <property type="molecule type" value="Genomic_DNA"/>
</dbReference>
<dbReference type="RefSeq" id="WP_003868594.1">
    <property type="nucleotide sequence ID" value="NC_010320.1"/>
</dbReference>
<dbReference type="SMR" id="B0K5S8"/>
<dbReference type="KEGG" id="tex:Teth514_0902"/>
<dbReference type="HOGENOM" id="CLU_046483_2_1_9"/>
<dbReference type="Proteomes" id="UP000002155">
    <property type="component" value="Chromosome"/>
</dbReference>
<dbReference type="GO" id="GO:0022627">
    <property type="term" value="C:cytosolic small ribosomal subunit"/>
    <property type="evidence" value="ECO:0007669"/>
    <property type="project" value="TreeGrafter"/>
</dbReference>
<dbReference type="GO" id="GO:0003723">
    <property type="term" value="F:RNA binding"/>
    <property type="evidence" value="ECO:0007669"/>
    <property type="project" value="TreeGrafter"/>
</dbReference>
<dbReference type="GO" id="GO:0003735">
    <property type="term" value="F:structural constituent of ribosome"/>
    <property type="evidence" value="ECO:0007669"/>
    <property type="project" value="InterPro"/>
</dbReference>
<dbReference type="GO" id="GO:0006412">
    <property type="term" value="P:translation"/>
    <property type="evidence" value="ECO:0007669"/>
    <property type="project" value="UniProtKB-UniRule"/>
</dbReference>
<dbReference type="FunFam" id="3.30.230.10:FF:000001">
    <property type="entry name" value="30S ribosomal protein S9"/>
    <property type="match status" value="1"/>
</dbReference>
<dbReference type="Gene3D" id="3.30.230.10">
    <property type="match status" value="1"/>
</dbReference>
<dbReference type="HAMAP" id="MF_00532_B">
    <property type="entry name" value="Ribosomal_uS9_B"/>
    <property type="match status" value="1"/>
</dbReference>
<dbReference type="InterPro" id="IPR020568">
    <property type="entry name" value="Ribosomal_Su5_D2-typ_SF"/>
</dbReference>
<dbReference type="InterPro" id="IPR000754">
    <property type="entry name" value="Ribosomal_uS9"/>
</dbReference>
<dbReference type="InterPro" id="IPR023035">
    <property type="entry name" value="Ribosomal_uS9_bac/plastid"/>
</dbReference>
<dbReference type="InterPro" id="IPR020574">
    <property type="entry name" value="Ribosomal_uS9_CS"/>
</dbReference>
<dbReference type="InterPro" id="IPR014721">
    <property type="entry name" value="Ribsml_uS5_D2-typ_fold_subgr"/>
</dbReference>
<dbReference type="NCBIfam" id="NF001099">
    <property type="entry name" value="PRK00132.1"/>
    <property type="match status" value="1"/>
</dbReference>
<dbReference type="PANTHER" id="PTHR21569">
    <property type="entry name" value="RIBOSOMAL PROTEIN S9"/>
    <property type="match status" value="1"/>
</dbReference>
<dbReference type="PANTHER" id="PTHR21569:SF1">
    <property type="entry name" value="SMALL RIBOSOMAL SUBUNIT PROTEIN US9M"/>
    <property type="match status" value="1"/>
</dbReference>
<dbReference type="Pfam" id="PF00380">
    <property type="entry name" value="Ribosomal_S9"/>
    <property type="match status" value="1"/>
</dbReference>
<dbReference type="SUPFAM" id="SSF54211">
    <property type="entry name" value="Ribosomal protein S5 domain 2-like"/>
    <property type="match status" value="1"/>
</dbReference>
<dbReference type="PROSITE" id="PS00360">
    <property type="entry name" value="RIBOSOMAL_S9"/>
    <property type="match status" value="1"/>
</dbReference>
<evidence type="ECO:0000255" key="1">
    <source>
        <dbReference type="HAMAP-Rule" id="MF_00532"/>
    </source>
</evidence>
<evidence type="ECO:0000256" key="2">
    <source>
        <dbReference type="SAM" id="MobiDB-lite"/>
    </source>
</evidence>
<evidence type="ECO:0000305" key="3"/>
<proteinExistence type="inferred from homology"/>
<reference key="1">
    <citation type="submission" date="2008-01" db="EMBL/GenBank/DDBJ databases">
        <title>Complete sequence of Thermoanaerobacter sp. X514.</title>
        <authorList>
            <consortium name="US DOE Joint Genome Institute"/>
            <person name="Copeland A."/>
            <person name="Lucas S."/>
            <person name="Lapidus A."/>
            <person name="Barry K."/>
            <person name="Glavina del Rio T."/>
            <person name="Dalin E."/>
            <person name="Tice H."/>
            <person name="Pitluck S."/>
            <person name="Bruce D."/>
            <person name="Goodwin L."/>
            <person name="Saunders E."/>
            <person name="Brettin T."/>
            <person name="Detter J.C."/>
            <person name="Han C."/>
            <person name="Schmutz J."/>
            <person name="Larimer F."/>
            <person name="Land M."/>
            <person name="Hauser L."/>
            <person name="Kyrpides N."/>
            <person name="Kim E."/>
            <person name="Hemme C."/>
            <person name="Fields M.W."/>
            <person name="He Z."/>
            <person name="Zhou J."/>
            <person name="Richardson P."/>
        </authorList>
    </citation>
    <scope>NUCLEOTIDE SEQUENCE [LARGE SCALE GENOMIC DNA]</scope>
    <source>
        <strain>X514</strain>
    </source>
</reference>
<protein>
    <recommendedName>
        <fullName evidence="1">Small ribosomal subunit protein uS9</fullName>
    </recommendedName>
    <alternativeName>
        <fullName evidence="3">30S ribosomal protein S9</fullName>
    </alternativeName>
</protein>
<feature type="chain" id="PRO_1000128190" description="Small ribosomal subunit protein uS9">
    <location>
        <begin position="1"/>
        <end position="130"/>
    </location>
</feature>
<feature type="region of interest" description="Disordered" evidence="2">
    <location>
        <begin position="111"/>
        <end position="130"/>
    </location>
</feature>
<name>RS9_THEPX</name>